<gene>
    <name evidence="1" type="primary">surE</name>
    <name type="ordered locus">Ccon26_05540</name>
    <name type="ORF">CCC13826_1575</name>
</gene>
<evidence type="ECO:0000255" key="1">
    <source>
        <dbReference type="HAMAP-Rule" id="MF_00060"/>
    </source>
</evidence>
<keyword id="KW-0963">Cytoplasm</keyword>
<keyword id="KW-0378">Hydrolase</keyword>
<keyword id="KW-0479">Metal-binding</keyword>
<keyword id="KW-0547">Nucleotide-binding</keyword>
<comment type="function">
    <text evidence="1">Nucleotidase that shows phosphatase activity on nucleoside 5'-monophosphates.</text>
</comment>
<comment type="catalytic activity">
    <reaction evidence="1">
        <text>a ribonucleoside 5'-phosphate + H2O = a ribonucleoside + phosphate</text>
        <dbReference type="Rhea" id="RHEA:12484"/>
        <dbReference type="ChEBI" id="CHEBI:15377"/>
        <dbReference type="ChEBI" id="CHEBI:18254"/>
        <dbReference type="ChEBI" id="CHEBI:43474"/>
        <dbReference type="ChEBI" id="CHEBI:58043"/>
        <dbReference type="EC" id="3.1.3.5"/>
    </reaction>
</comment>
<comment type="cofactor">
    <cofactor evidence="1">
        <name>a divalent metal cation</name>
        <dbReference type="ChEBI" id="CHEBI:60240"/>
    </cofactor>
    <text evidence="1">Binds 1 divalent metal cation per subunit.</text>
</comment>
<comment type="subcellular location">
    <subcellularLocation>
        <location evidence="1">Cytoplasm</location>
    </subcellularLocation>
</comment>
<comment type="similarity">
    <text evidence="1">Belongs to the SurE nucleotidase family.</text>
</comment>
<proteinExistence type="inferred from homology"/>
<sequence length="258" mass="28310">MKEILITNDDGFEATGLLALKEALSELDGVNVTIVAPSSEKSACAHSLTLTRPLRFIKLDDNFFKLDDATPSDCVYLALHALYNKKPDLVISGINHGANLGEDITYSGTCGAAMEGVLQGIRSIAFSQFYENNSLNELGFELAKEVVKFITPKVLNDEISLNPREFLNVNIPATTSKNFKGYAVVPAGRRTYATHATLNRNPRGIEYYWLGNAALEYEKGEPSDISKVNEGFATITPIKLNMTSYESLESLKGKFDAK</sequence>
<dbReference type="EC" id="3.1.3.5" evidence="1"/>
<dbReference type="EMBL" id="CP000792">
    <property type="protein sequence ID" value="EAT99025.1"/>
    <property type="molecule type" value="Genomic_DNA"/>
</dbReference>
<dbReference type="RefSeq" id="WP_012001421.1">
    <property type="nucleotide sequence ID" value="NC_009802.2"/>
</dbReference>
<dbReference type="SMR" id="A7ZCD9"/>
<dbReference type="STRING" id="360104.CCC13826_1575"/>
<dbReference type="KEGG" id="cco:CCC13826_1575"/>
<dbReference type="eggNOG" id="COG0496">
    <property type="taxonomic scope" value="Bacteria"/>
</dbReference>
<dbReference type="HOGENOM" id="CLU_045192_1_2_7"/>
<dbReference type="OrthoDB" id="9780815at2"/>
<dbReference type="Proteomes" id="UP000001121">
    <property type="component" value="Chromosome"/>
</dbReference>
<dbReference type="GO" id="GO:0005737">
    <property type="term" value="C:cytoplasm"/>
    <property type="evidence" value="ECO:0007669"/>
    <property type="project" value="UniProtKB-SubCell"/>
</dbReference>
<dbReference type="GO" id="GO:0008254">
    <property type="term" value="F:3'-nucleotidase activity"/>
    <property type="evidence" value="ECO:0007669"/>
    <property type="project" value="TreeGrafter"/>
</dbReference>
<dbReference type="GO" id="GO:0008253">
    <property type="term" value="F:5'-nucleotidase activity"/>
    <property type="evidence" value="ECO:0007669"/>
    <property type="project" value="UniProtKB-UniRule"/>
</dbReference>
<dbReference type="GO" id="GO:0004309">
    <property type="term" value="F:exopolyphosphatase activity"/>
    <property type="evidence" value="ECO:0007669"/>
    <property type="project" value="TreeGrafter"/>
</dbReference>
<dbReference type="GO" id="GO:0046872">
    <property type="term" value="F:metal ion binding"/>
    <property type="evidence" value="ECO:0007669"/>
    <property type="project" value="UniProtKB-UniRule"/>
</dbReference>
<dbReference type="GO" id="GO:0000166">
    <property type="term" value="F:nucleotide binding"/>
    <property type="evidence" value="ECO:0007669"/>
    <property type="project" value="UniProtKB-KW"/>
</dbReference>
<dbReference type="Gene3D" id="3.40.1210.10">
    <property type="entry name" value="Survival protein SurE-like phosphatase/nucleotidase"/>
    <property type="match status" value="1"/>
</dbReference>
<dbReference type="HAMAP" id="MF_00060">
    <property type="entry name" value="SurE"/>
    <property type="match status" value="1"/>
</dbReference>
<dbReference type="InterPro" id="IPR030048">
    <property type="entry name" value="SurE"/>
</dbReference>
<dbReference type="InterPro" id="IPR002828">
    <property type="entry name" value="SurE-like_Pase/nucleotidase"/>
</dbReference>
<dbReference type="InterPro" id="IPR036523">
    <property type="entry name" value="SurE-like_sf"/>
</dbReference>
<dbReference type="NCBIfam" id="NF001490">
    <property type="entry name" value="PRK00346.1-4"/>
    <property type="match status" value="1"/>
</dbReference>
<dbReference type="NCBIfam" id="NF001494">
    <property type="entry name" value="PRK00346.2-4"/>
    <property type="match status" value="1"/>
</dbReference>
<dbReference type="NCBIfam" id="TIGR00087">
    <property type="entry name" value="surE"/>
    <property type="match status" value="1"/>
</dbReference>
<dbReference type="PANTHER" id="PTHR30457">
    <property type="entry name" value="5'-NUCLEOTIDASE SURE"/>
    <property type="match status" value="1"/>
</dbReference>
<dbReference type="PANTHER" id="PTHR30457:SF12">
    <property type="entry name" value="5'_3'-NUCLEOTIDASE SURE"/>
    <property type="match status" value="1"/>
</dbReference>
<dbReference type="Pfam" id="PF01975">
    <property type="entry name" value="SurE"/>
    <property type="match status" value="1"/>
</dbReference>
<dbReference type="SUPFAM" id="SSF64167">
    <property type="entry name" value="SurE-like"/>
    <property type="match status" value="1"/>
</dbReference>
<name>SURE_CAMC1</name>
<organism>
    <name type="scientific">Campylobacter concisus (strain 13826)</name>
    <dbReference type="NCBI Taxonomy" id="360104"/>
    <lineage>
        <taxon>Bacteria</taxon>
        <taxon>Pseudomonadati</taxon>
        <taxon>Campylobacterota</taxon>
        <taxon>Epsilonproteobacteria</taxon>
        <taxon>Campylobacterales</taxon>
        <taxon>Campylobacteraceae</taxon>
        <taxon>Campylobacter</taxon>
    </lineage>
</organism>
<accession>A7ZCD9</accession>
<feature type="chain" id="PRO_1000007713" description="5'-nucleotidase SurE">
    <location>
        <begin position="1"/>
        <end position="258"/>
    </location>
</feature>
<feature type="binding site" evidence="1">
    <location>
        <position position="9"/>
    </location>
    <ligand>
        <name>a divalent metal cation</name>
        <dbReference type="ChEBI" id="CHEBI:60240"/>
    </ligand>
</feature>
<feature type="binding site" evidence="1">
    <location>
        <position position="10"/>
    </location>
    <ligand>
        <name>a divalent metal cation</name>
        <dbReference type="ChEBI" id="CHEBI:60240"/>
    </ligand>
</feature>
<feature type="binding site" evidence="1">
    <location>
        <position position="42"/>
    </location>
    <ligand>
        <name>a divalent metal cation</name>
        <dbReference type="ChEBI" id="CHEBI:60240"/>
    </ligand>
</feature>
<feature type="binding site" evidence="1">
    <location>
        <position position="95"/>
    </location>
    <ligand>
        <name>a divalent metal cation</name>
        <dbReference type="ChEBI" id="CHEBI:60240"/>
    </ligand>
</feature>
<protein>
    <recommendedName>
        <fullName evidence="1">5'-nucleotidase SurE</fullName>
        <ecNumber evidence="1">3.1.3.5</ecNumber>
    </recommendedName>
    <alternativeName>
        <fullName evidence="1">Nucleoside 5'-monophosphate phosphohydrolase</fullName>
    </alternativeName>
</protein>
<reference key="1">
    <citation type="submission" date="2007-10" db="EMBL/GenBank/DDBJ databases">
        <title>Genome sequence of Campylobacter concisus 13826 isolated from human feces.</title>
        <authorList>
            <person name="Fouts D.E."/>
            <person name="Mongodin E.F."/>
            <person name="Puiu D."/>
            <person name="Sebastian Y."/>
            <person name="Miller W.G."/>
            <person name="Mandrell R.E."/>
            <person name="On S."/>
            <person name="Nelson K.E."/>
        </authorList>
    </citation>
    <scope>NUCLEOTIDE SEQUENCE [LARGE SCALE GENOMIC DNA]</scope>
    <source>
        <strain>13826</strain>
    </source>
</reference>